<reference key="1">
    <citation type="journal article" date="2012" name="Biochemistry (Mosc.)">
        <title>Cloning, purification, and characterization of galactomannan-degrading enzymes from Myceliophthora thermophila.</title>
        <authorList>
            <person name="Dotsenko G.S."/>
            <person name="Semenova M.V."/>
            <person name="Sinitsyna O.A."/>
            <person name="Hinz S.W."/>
            <person name="Wery J."/>
            <person name="Zorov I.N."/>
            <person name="Kondratieva E.G."/>
            <person name="Sinitsyn A.P."/>
        </authorList>
    </citation>
    <scope>NUCLEOTIDE SEQUENCE [GENOMIC DNA]</scope>
    <scope>FUNCTION</scope>
    <scope>BIOPHYSICOCHEMICAL PROPERTIES</scope>
    <scope>SUBCELLULAR LOCATION</scope>
    <source>
        <strain>C1 / VKM F-3500D</strain>
    </source>
</reference>
<evidence type="ECO:0000250" key="1"/>
<evidence type="ECO:0000255" key="2"/>
<evidence type="ECO:0000269" key="3">
    <source>
    </source>
</evidence>
<evidence type="ECO:0000305" key="4"/>
<feature type="chain" id="PRO_0000425599" description="Beta-mannosidase B">
    <location>
        <begin position="1"/>
        <end position="855"/>
    </location>
</feature>
<feature type="active site" description="Proton donor" evidence="1">
    <location>
        <position position="430"/>
    </location>
</feature>
<feature type="glycosylation site" description="N-linked (GlcNAc...) asparagine" evidence="2">
    <location>
        <position position="98"/>
    </location>
</feature>
<feature type="glycosylation site" description="N-linked (GlcNAc...) asparagine" evidence="2">
    <location>
        <position position="693"/>
    </location>
</feature>
<feature type="glycosylation site" description="N-linked (GlcNAc...) asparagine" evidence="2">
    <location>
        <position position="730"/>
    </location>
</feature>
<dbReference type="EC" id="3.2.1.25"/>
<dbReference type="EMBL" id="JQ437476">
    <property type="protein sequence ID" value="AFJ59925.1"/>
    <property type="molecule type" value="Genomic_DNA"/>
</dbReference>
<dbReference type="SMR" id="I2C092"/>
<dbReference type="CAZy" id="GH2">
    <property type="family name" value="Glycoside Hydrolase Family 2"/>
</dbReference>
<dbReference type="GlyCosmos" id="I2C092">
    <property type="glycosylation" value="3 sites, No reported glycans"/>
</dbReference>
<dbReference type="VEuPathDB" id="FungiDB:MYCTH_90655"/>
<dbReference type="UniPathway" id="UPA00280"/>
<dbReference type="GO" id="GO:0005576">
    <property type="term" value="C:extracellular region"/>
    <property type="evidence" value="ECO:0007669"/>
    <property type="project" value="UniProtKB-SubCell"/>
</dbReference>
<dbReference type="GO" id="GO:0004567">
    <property type="term" value="F:beta-mannosidase activity"/>
    <property type="evidence" value="ECO:0007669"/>
    <property type="project" value="UniProtKB-EC"/>
</dbReference>
<dbReference type="GO" id="GO:0006516">
    <property type="term" value="P:glycoprotein catabolic process"/>
    <property type="evidence" value="ECO:0007669"/>
    <property type="project" value="TreeGrafter"/>
</dbReference>
<dbReference type="GO" id="GO:0000272">
    <property type="term" value="P:polysaccharide catabolic process"/>
    <property type="evidence" value="ECO:0007669"/>
    <property type="project" value="UniProtKB-KW"/>
</dbReference>
<dbReference type="FunFam" id="2.60.120.260:FF:000118">
    <property type="entry name" value="Beta-mannosidase B"/>
    <property type="match status" value="1"/>
</dbReference>
<dbReference type="FunFam" id="3.20.20.80:FF:000050">
    <property type="entry name" value="Beta-mannosidase B"/>
    <property type="match status" value="1"/>
</dbReference>
<dbReference type="Gene3D" id="2.60.120.260">
    <property type="entry name" value="Galactose-binding domain-like"/>
    <property type="match status" value="1"/>
</dbReference>
<dbReference type="Gene3D" id="3.20.20.80">
    <property type="entry name" value="Glycosidases"/>
    <property type="match status" value="1"/>
</dbReference>
<dbReference type="Gene3D" id="2.60.40.10">
    <property type="entry name" value="Immunoglobulins"/>
    <property type="match status" value="2"/>
</dbReference>
<dbReference type="InterPro" id="IPR036156">
    <property type="entry name" value="Beta-gal/glucu_dom_sf"/>
</dbReference>
<dbReference type="InterPro" id="IPR054593">
    <property type="entry name" value="Beta-mannosidase-like_N2"/>
</dbReference>
<dbReference type="InterPro" id="IPR050887">
    <property type="entry name" value="Beta-mannosidase_GH2"/>
</dbReference>
<dbReference type="InterPro" id="IPR041625">
    <property type="entry name" value="Beta-mannosidase_Ig"/>
</dbReference>
<dbReference type="InterPro" id="IPR008979">
    <property type="entry name" value="Galactose-bd-like_sf"/>
</dbReference>
<dbReference type="InterPro" id="IPR006102">
    <property type="entry name" value="Glyco_hydro_2_Ig-like"/>
</dbReference>
<dbReference type="InterPro" id="IPR017853">
    <property type="entry name" value="Glycoside_hydrolase_SF"/>
</dbReference>
<dbReference type="InterPro" id="IPR013783">
    <property type="entry name" value="Ig-like_fold"/>
</dbReference>
<dbReference type="InterPro" id="IPR041447">
    <property type="entry name" value="Mannosidase_ig"/>
</dbReference>
<dbReference type="PANTHER" id="PTHR43730">
    <property type="entry name" value="BETA-MANNOSIDASE"/>
    <property type="match status" value="1"/>
</dbReference>
<dbReference type="PANTHER" id="PTHR43730:SF1">
    <property type="entry name" value="BETA-MANNOSIDASE"/>
    <property type="match status" value="1"/>
</dbReference>
<dbReference type="Pfam" id="PF00703">
    <property type="entry name" value="Glyco_hydro_2"/>
    <property type="match status" value="1"/>
</dbReference>
<dbReference type="Pfam" id="PF22666">
    <property type="entry name" value="Glyco_hydro_2_N2"/>
    <property type="match status" value="1"/>
</dbReference>
<dbReference type="Pfam" id="PF17753">
    <property type="entry name" value="Ig_mannosidase"/>
    <property type="match status" value="1"/>
</dbReference>
<dbReference type="Pfam" id="PF17786">
    <property type="entry name" value="Mannosidase_ig"/>
    <property type="match status" value="1"/>
</dbReference>
<dbReference type="SUPFAM" id="SSF51445">
    <property type="entry name" value="(Trans)glycosidases"/>
    <property type="match status" value="1"/>
</dbReference>
<dbReference type="SUPFAM" id="SSF49303">
    <property type="entry name" value="beta-Galactosidase/glucuronidase domain"/>
    <property type="match status" value="2"/>
</dbReference>
<dbReference type="SUPFAM" id="SSF49785">
    <property type="entry name" value="Galactose-binding domain-like"/>
    <property type="match status" value="1"/>
</dbReference>
<protein>
    <recommendedName>
        <fullName>Beta-mannosidase B</fullName>
        <ecNumber>3.2.1.25</ecNumber>
    </recommendedName>
    <alternativeName>
        <fullName>Mannanase B</fullName>
        <shortName>Mannase B</shortName>
    </alternativeName>
</protein>
<accession>I2C092</accession>
<comment type="function">
    <text evidence="1 3">Exoglycosidase that cleaves the single beta-linked mannose residue from the non-reducing end of beta-mannosidic oligosaccharides of various complexity and length. Prefers mannobiose over mannotriose. Is also severely restricted by galactosyl substitutions at the +1 subsite (By similarity). Has no activity against polymeric mannan.</text>
</comment>
<comment type="catalytic activity">
    <reaction>
        <text>Hydrolysis of terminal, non-reducing beta-D-mannose residues in beta-D-mannosides.</text>
        <dbReference type="EC" id="3.2.1.25"/>
    </reaction>
</comment>
<comment type="biophysicochemical properties">
    <kinetics>
        <KM evidence="3">0.41 mM for p-nitrophenyl-beta-mannopyranoside</KM>
        <text>kcat is 15 sec(-1) with p-nitrophenyl-beta-mannopyranoside as substrate.</text>
    </kinetics>
    <phDependence>
        <text evidence="3">Optimum pH is 5.3. Active from pH 4.2 to 6.5.</text>
    </phDependence>
    <temperatureDependence>
        <text evidence="3">Optimum temperature is 40 degrees Celsius.</text>
    </temperatureDependence>
</comment>
<comment type="pathway">
    <text>Glycan metabolism; N-glycan degradation.</text>
</comment>
<comment type="subunit">
    <text evidence="1">Homodimer.</text>
</comment>
<comment type="subcellular location">
    <subcellularLocation>
        <location evidence="3">Secreted</location>
    </subcellularLocation>
</comment>
<comment type="similarity">
    <text evidence="4">Belongs to the glycosyl hydrolase 2 family. Beta-mannosidase B subfamily.</text>
</comment>
<name>MANBB_THETO</name>
<keyword id="KW-0119">Carbohydrate metabolism</keyword>
<keyword id="KW-0325">Glycoprotein</keyword>
<keyword id="KW-0326">Glycosidase</keyword>
<keyword id="KW-0378">Hydrolase</keyword>
<keyword id="KW-0624">Polysaccharide degradation</keyword>
<keyword id="KW-0964">Secreted</keyword>
<sequence>MAPRVVIPLDQNWEFRQADKPDSKFLPVSQFPTNVHLDLQHHGLIPDPFIGKNELLVQWVGEAQWTYRTVFAAPPVPEGARAVIAFDGLDTFATVVLNGTTILESDNMFLPHRVEVTSVLKAEGNELVITFDSAYLRGCKLVEQHPNHKWGCWNGDVSRLAVRKAQYHWGWDWGPTLLTCGPWRPVHLEIYESRLSDLYAETVVDKSLKRASVKVTAVAERRADRVRFDIALDGQQVATETAELDATSGEATVSFLIDSPALWYPVRYGKQPLYDIRATLLAGDDEVDTLSKRIGLRRAELIQRPLEGQPGTSFFFEVNNIRIYCGGSDWIPADNFIPRISRRRYYDWVRLVAEGNQFMIRVWGGGIYEEQAFYDACDELGILVWQDFMFGCGNYPAWPALLESIRREATENVKRLRHHPSIVIWAGNNEDYQYQESEGLTYDYANKDAESWLKTDFPARYIYEKILADVCADLVPSTPYHPGSPWGAGLNTHDATVGDIHQWNVWHGTQEKWQNFDRLVGRFVSEFGMQAFPAVKTIDAYLPLGRDDPDRYPQSSTVDFHNKAEGHERRIALYLVENLRYAPDPLEHFVYCTQLMQGECLASAYRLWKREWRGPGREYCGGALVWQTNDCWPVTSWSIVDYYLRPKLAYFTVKREMAPVSIGITRRTHLHPRDRHTRVNVDVKTQIEVWASNLTLEDLTVDCVLKAWDVESGEETFSETVAAALLLRENRSTEIAALDVPVRQKNVGEEGRIVVAAYLVDKEGRQMARYVNWPEPLKYVHLQKPRALRAQLTADYSAVEVSAEVPVKGVALECEDDGVRFDDNLVDIVPGEVVTIGVSGAGKDTKIETRYLGMI</sequence>
<proteinExistence type="evidence at protein level"/>
<organism>
    <name type="scientific">Thermothelomyces thermophilus</name>
    <name type="common">Myceliophthora thermophila</name>
    <dbReference type="NCBI Taxonomy" id="78579"/>
    <lineage>
        <taxon>Eukaryota</taxon>
        <taxon>Fungi</taxon>
        <taxon>Dikarya</taxon>
        <taxon>Ascomycota</taxon>
        <taxon>Pezizomycotina</taxon>
        <taxon>Sordariomycetes</taxon>
        <taxon>Sordariomycetidae</taxon>
        <taxon>Sordariales</taxon>
        <taxon>Chaetomiaceae</taxon>
        <taxon>Thermothelomyces</taxon>
    </lineage>
</organism>
<gene>
    <name type="primary">man9</name>
    <name type="synonym">bmann9</name>
    <name type="synonym">mnd2I</name>
    <name type="synonym">mndB</name>
</gene>